<evidence type="ECO:0000255" key="1">
    <source>
        <dbReference type="HAMAP-Rule" id="MF_01690"/>
    </source>
</evidence>
<comment type="function">
    <text evidence="1">Catalyzes the hydrolysis of N-succinyl-L,L-diaminopimelic acid (SDAP), forming succinate and LL-2,6-diaminopimelate (DAP), an intermediate involved in the bacterial biosynthesis of lysine and meso-diaminopimelic acid, an essential component of bacterial cell walls.</text>
</comment>
<comment type="catalytic activity">
    <reaction evidence="1">
        <text>N-succinyl-(2S,6S)-2,6-diaminopimelate + H2O = (2S,6S)-2,6-diaminopimelate + succinate</text>
        <dbReference type="Rhea" id="RHEA:22608"/>
        <dbReference type="ChEBI" id="CHEBI:15377"/>
        <dbReference type="ChEBI" id="CHEBI:30031"/>
        <dbReference type="ChEBI" id="CHEBI:57609"/>
        <dbReference type="ChEBI" id="CHEBI:58087"/>
        <dbReference type="EC" id="3.5.1.18"/>
    </reaction>
</comment>
<comment type="cofactor">
    <cofactor evidence="1">
        <name>Zn(2+)</name>
        <dbReference type="ChEBI" id="CHEBI:29105"/>
    </cofactor>
    <cofactor evidence="1">
        <name>Co(2+)</name>
        <dbReference type="ChEBI" id="CHEBI:48828"/>
    </cofactor>
    <text evidence="1">Binds 2 Zn(2+) or Co(2+) ions per subunit.</text>
</comment>
<comment type="pathway">
    <text evidence="1">Amino-acid biosynthesis; L-lysine biosynthesis via DAP pathway; LL-2,6-diaminopimelate from (S)-tetrahydrodipicolinate (succinylase route): step 3/3.</text>
</comment>
<comment type="subunit">
    <text evidence="1">Homodimer.</text>
</comment>
<comment type="similarity">
    <text evidence="1">Belongs to the peptidase M20A family. DapE subfamily.</text>
</comment>
<sequence length="377" mass="39441">MIDPLDLTQRLIACPSVTPADAGAMAVIATALESIGFTVHRFAAGEAPDGPVENLFAIRGQGGPHFAFAGHSDVVPPGDGWTSDPFVPEIRGELLHGRGAVDMKGAIAAFIAAAARLGDHPGTISLIITGDEEGPATFGTVALIDWMKARGLCPDLCLVGEPTSTHRLGDMVKIGRRGSVNMWIENVGTQGHVAYPHLAANPIPALVKALDALAALHLDDGNAWFQPSNLEITTVDVGNAATNVIPAVARARLNIRFNDEHRGADLVELVRRTVAEHAPAATVRAVISGESFITPPGDFSALISAAIMKVTGLTPELSTTGGTSDARFLSKLCPVVEFGLCNATMHKLDEAVAIPDLHALADIYEDIVRTVLAHPGA</sequence>
<accession>A5VCF0</accession>
<keyword id="KW-0028">Amino-acid biosynthesis</keyword>
<keyword id="KW-0170">Cobalt</keyword>
<keyword id="KW-0220">Diaminopimelate biosynthesis</keyword>
<keyword id="KW-0378">Hydrolase</keyword>
<keyword id="KW-0457">Lysine biosynthesis</keyword>
<keyword id="KW-0479">Metal-binding</keyword>
<keyword id="KW-1185">Reference proteome</keyword>
<keyword id="KW-0862">Zinc</keyword>
<gene>
    <name evidence="1" type="primary">dapE</name>
    <name type="ordered locus">Swit_3620</name>
</gene>
<organism>
    <name type="scientific">Rhizorhabdus wittichii (strain DSM 6014 / CCUG 31198 / JCM 15750 / NBRC 105917 / EY 4224 / RW1)</name>
    <name type="common">Sphingomonas wittichii</name>
    <dbReference type="NCBI Taxonomy" id="392499"/>
    <lineage>
        <taxon>Bacteria</taxon>
        <taxon>Pseudomonadati</taxon>
        <taxon>Pseudomonadota</taxon>
        <taxon>Alphaproteobacteria</taxon>
        <taxon>Sphingomonadales</taxon>
        <taxon>Sphingomonadaceae</taxon>
        <taxon>Rhizorhabdus</taxon>
    </lineage>
</organism>
<name>DAPE_RHIWR</name>
<protein>
    <recommendedName>
        <fullName evidence="1">Succinyl-diaminopimelate desuccinylase</fullName>
        <shortName evidence="1">SDAP desuccinylase</shortName>
        <ecNumber evidence="1">3.5.1.18</ecNumber>
    </recommendedName>
    <alternativeName>
        <fullName evidence="1">N-succinyl-LL-2,6-diaminoheptanedioate amidohydrolase</fullName>
    </alternativeName>
</protein>
<dbReference type="EC" id="3.5.1.18" evidence="1"/>
<dbReference type="EMBL" id="CP000699">
    <property type="protein sequence ID" value="ABQ69966.1"/>
    <property type="molecule type" value="Genomic_DNA"/>
</dbReference>
<dbReference type="SMR" id="A5VCF0"/>
<dbReference type="STRING" id="392499.Swit_3620"/>
<dbReference type="PaxDb" id="392499-Swit_3620"/>
<dbReference type="KEGG" id="swi:Swit_3620"/>
<dbReference type="eggNOG" id="COG0624">
    <property type="taxonomic scope" value="Bacteria"/>
</dbReference>
<dbReference type="HOGENOM" id="CLU_021802_4_0_5"/>
<dbReference type="OrthoDB" id="9809784at2"/>
<dbReference type="UniPathway" id="UPA00034">
    <property type="reaction ID" value="UER00021"/>
</dbReference>
<dbReference type="Proteomes" id="UP000001989">
    <property type="component" value="Chromosome"/>
</dbReference>
<dbReference type="GO" id="GO:0008777">
    <property type="term" value="F:acetylornithine deacetylase activity"/>
    <property type="evidence" value="ECO:0007669"/>
    <property type="project" value="TreeGrafter"/>
</dbReference>
<dbReference type="GO" id="GO:0050897">
    <property type="term" value="F:cobalt ion binding"/>
    <property type="evidence" value="ECO:0007669"/>
    <property type="project" value="UniProtKB-UniRule"/>
</dbReference>
<dbReference type="GO" id="GO:0009014">
    <property type="term" value="F:succinyl-diaminopimelate desuccinylase activity"/>
    <property type="evidence" value="ECO:0007669"/>
    <property type="project" value="UniProtKB-UniRule"/>
</dbReference>
<dbReference type="GO" id="GO:0008270">
    <property type="term" value="F:zinc ion binding"/>
    <property type="evidence" value="ECO:0007669"/>
    <property type="project" value="UniProtKB-UniRule"/>
</dbReference>
<dbReference type="GO" id="GO:0019877">
    <property type="term" value="P:diaminopimelate biosynthetic process"/>
    <property type="evidence" value="ECO:0007669"/>
    <property type="project" value="UniProtKB-UniRule"/>
</dbReference>
<dbReference type="GO" id="GO:0006526">
    <property type="term" value="P:L-arginine biosynthetic process"/>
    <property type="evidence" value="ECO:0007669"/>
    <property type="project" value="TreeGrafter"/>
</dbReference>
<dbReference type="GO" id="GO:0009089">
    <property type="term" value="P:lysine biosynthetic process via diaminopimelate"/>
    <property type="evidence" value="ECO:0007669"/>
    <property type="project" value="UniProtKB-UniRule"/>
</dbReference>
<dbReference type="CDD" id="cd03891">
    <property type="entry name" value="M20_DapE_proteobac"/>
    <property type="match status" value="1"/>
</dbReference>
<dbReference type="Gene3D" id="3.40.630.10">
    <property type="entry name" value="Zn peptidases"/>
    <property type="match status" value="2"/>
</dbReference>
<dbReference type="HAMAP" id="MF_01690">
    <property type="entry name" value="DapE"/>
    <property type="match status" value="1"/>
</dbReference>
<dbReference type="InterPro" id="IPR001261">
    <property type="entry name" value="ArgE/DapE_CS"/>
</dbReference>
<dbReference type="InterPro" id="IPR036264">
    <property type="entry name" value="Bact_exopeptidase_dim_dom"/>
</dbReference>
<dbReference type="InterPro" id="IPR005941">
    <property type="entry name" value="DapE_proteobac"/>
</dbReference>
<dbReference type="InterPro" id="IPR002933">
    <property type="entry name" value="Peptidase_M20"/>
</dbReference>
<dbReference type="InterPro" id="IPR011650">
    <property type="entry name" value="Peptidase_M20_dimer"/>
</dbReference>
<dbReference type="InterPro" id="IPR050072">
    <property type="entry name" value="Peptidase_M20A"/>
</dbReference>
<dbReference type="NCBIfam" id="TIGR01246">
    <property type="entry name" value="dapE_proteo"/>
    <property type="match status" value="1"/>
</dbReference>
<dbReference type="NCBIfam" id="NF009557">
    <property type="entry name" value="PRK13009.1"/>
    <property type="match status" value="1"/>
</dbReference>
<dbReference type="PANTHER" id="PTHR43808">
    <property type="entry name" value="ACETYLORNITHINE DEACETYLASE"/>
    <property type="match status" value="1"/>
</dbReference>
<dbReference type="PANTHER" id="PTHR43808:SF31">
    <property type="entry name" value="N-ACETYL-L-CITRULLINE DEACETYLASE"/>
    <property type="match status" value="1"/>
</dbReference>
<dbReference type="Pfam" id="PF07687">
    <property type="entry name" value="M20_dimer"/>
    <property type="match status" value="1"/>
</dbReference>
<dbReference type="Pfam" id="PF01546">
    <property type="entry name" value="Peptidase_M20"/>
    <property type="match status" value="1"/>
</dbReference>
<dbReference type="SUPFAM" id="SSF55031">
    <property type="entry name" value="Bacterial exopeptidase dimerisation domain"/>
    <property type="match status" value="1"/>
</dbReference>
<dbReference type="SUPFAM" id="SSF53187">
    <property type="entry name" value="Zn-dependent exopeptidases"/>
    <property type="match status" value="1"/>
</dbReference>
<dbReference type="PROSITE" id="PS00759">
    <property type="entry name" value="ARGE_DAPE_CPG2_2"/>
    <property type="match status" value="1"/>
</dbReference>
<reference key="1">
    <citation type="journal article" date="2010" name="J. Bacteriol.">
        <title>Genome sequence of the dioxin-mineralizing bacterium Sphingomonas wittichii RW1.</title>
        <authorList>
            <person name="Miller T.R."/>
            <person name="Delcher A.L."/>
            <person name="Salzberg S.L."/>
            <person name="Saunders E."/>
            <person name="Detter J.C."/>
            <person name="Halden R.U."/>
        </authorList>
    </citation>
    <scope>NUCLEOTIDE SEQUENCE [LARGE SCALE GENOMIC DNA]</scope>
    <source>
        <strain>DSM 6014 / CCUG 31198 / JCM 15750 / NBRC 105917 / EY 4224 / RW1</strain>
    </source>
</reference>
<feature type="chain" id="PRO_0000375755" description="Succinyl-diaminopimelate desuccinylase">
    <location>
        <begin position="1"/>
        <end position="377"/>
    </location>
</feature>
<feature type="active site" evidence="1">
    <location>
        <position position="73"/>
    </location>
</feature>
<feature type="active site" description="Proton acceptor" evidence="1">
    <location>
        <position position="132"/>
    </location>
</feature>
<feature type="binding site" evidence="1">
    <location>
        <position position="71"/>
    </location>
    <ligand>
        <name>Zn(2+)</name>
        <dbReference type="ChEBI" id="CHEBI:29105"/>
        <label>1</label>
    </ligand>
</feature>
<feature type="binding site" evidence="1">
    <location>
        <position position="102"/>
    </location>
    <ligand>
        <name>Zn(2+)</name>
        <dbReference type="ChEBI" id="CHEBI:29105"/>
        <label>1</label>
    </ligand>
</feature>
<feature type="binding site" evidence="1">
    <location>
        <position position="102"/>
    </location>
    <ligand>
        <name>Zn(2+)</name>
        <dbReference type="ChEBI" id="CHEBI:29105"/>
        <label>2</label>
    </ligand>
</feature>
<feature type="binding site" evidence="1">
    <location>
        <position position="133"/>
    </location>
    <ligand>
        <name>Zn(2+)</name>
        <dbReference type="ChEBI" id="CHEBI:29105"/>
        <label>2</label>
    </ligand>
</feature>
<feature type="binding site" evidence="1">
    <location>
        <position position="161"/>
    </location>
    <ligand>
        <name>Zn(2+)</name>
        <dbReference type="ChEBI" id="CHEBI:29105"/>
        <label>1</label>
    </ligand>
</feature>
<feature type="binding site" evidence="1">
    <location>
        <position position="346"/>
    </location>
    <ligand>
        <name>Zn(2+)</name>
        <dbReference type="ChEBI" id="CHEBI:29105"/>
        <label>2</label>
    </ligand>
</feature>
<proteinExistence type="inferred from homology"/>